<comment type="function">
    <text evidence="1">The RuvA-RuvB-RuvC complex processes Holliday junction (HJ) DNA during genetic recombination and DNA repair, while the RuvA-RuvB complex plays an important role in the rescue of blocked DNA replication forks via replication fork reversal (RFR). RuvA specifically binds to HJ cruciform DNA, conferring on it an open structure. The RuvB hexamer acts as an ATP-dependent pump, pulling dsDNA into and through the RuvAB complex. RuvB forms 2 homohexamers on either side of HJ DNA bound by 1 or 2 RuvA tetramers; 4 subunits per hexamer contact DNA at a time. Coordinated motions by a converter formed by DNA-disengaged RuvB subunits stimulates ATP hydrolysis and nucleotide exchange. Immobilization of the converter enables RuvB to convert the ATP-contained energy into a lever motion, pulling 2 nucleotides of DNA out of the RuvA tetramer per ATP hydrolyzed, thus driving DNA branch migration. The RuvB motors rotate together with the DNA substrate, which together with the progressing nucleotide cycle form the mechanistic basis for DNA recombination by continuous HJ branch migration. Branch migration allows RuvC to scan DNA until it finds its consensus sequence, where it cleaves and resolves cruciform DNA.</text>
</comment>
<comment type="catalytic activity">
    <reaction evidence="1">
        <text>ATP + H2O = ADP + phosphate + H(+)</text>
        <dbReference type="Rhea" id="RHEA:13065"/>
        <dbReference type="ChEBI" id="CHEBI:15377"/>
        <dbReference type="ChEBI" id="CHEBI:15378"/>
        <dbReference type="ChEBI" id="CHEBI:30616"/>
        <dbReference type="ChEBI" id="CHEBI:43474"/>
        <dbReference type="ChEBI" id="CHEBI:456216"/>
    </reaction>
</comment>
<comment type="subunit">
    <text evidence="1">Homohexamer. Forms an RuvA(8)-RuvB(12)-Holliday junction (HJ) complex. HJ DNA is sandwiched between 2 RuvA tetramers; dsDNA enters through RuvA and exits via RuvB. An RuvB hexamer assembles on each DNA strand where it exits the tetramer. Each RuvB hexamer is contacted by two RuvA subunits (via domain III) on 2 adjacent RuvB subunits; this complex drives branch migration. In the full resolvosome a probable DNA-RuvA(4)-RuvB(12)-RuvC(2) complex forms which resolves the HJ.</text>
</comment>
<comment type="subcellular location">
    <subcellularLocation>
        <location evidence="1">Cytoplasm</location>
    </subcellularLocation>
</comment>
<comment type="domain">
    <text evidence="1">Has 3 domains, the large (RuvB-L) and small ATPase (RuvB-S) domains and the C-terminal head (RuvB-H) domain. The head domain binds DNA, while the ATPase domains jointly bind ATP, ADP or are empty depending on the state of the subunit in the translocation cycle. During a single DNA translocation step the structure of each domain remains the same, but their relative positions change.</text>
</comment>
<comment type="similarity">
    <text evidence="1">Belongs to the RuvB family.</text>
</comment>
<keyword id="KW-0067">ATP-binding</keyword>
<keyword id="KW-0963">Cytoplasm</keyword>
<keyword id="KW-0227">DNA damage</keyword>
<keyword id="KW-0233">DNA recombination</keyword>
<keyword id="KW-0234">DNA repair</keyword>
<keyword id="KW-0238">DNA-binding</keyword>
<keyword id="KW-0378">Hydrolase</keyword>
<keyword id="KW-0547">Nucleotide-binding</keyword>
<keyword id="KW-1185">Reference proteome</keyword>
<name>RUVB_RUEPO</name>
<reference key="1">
    <citation type="journal article" date="2004" name="Nature">
        <title>Genome sequence of Silicibacter pomeroyi reveals adaptations to the marine environment.</title>
        <authorList>
            <person name="Moran M.A."/>
            <person name="Buchan A."/>
            <person name="Gonzalez J.M."/>
            <person name="Heidelberg J.F."/>
            <person name="Whitman W.B."/>
            <person name="Kiene R.P."/>
            <person name="Henriksen J.R."/>
            <person name="King G.M."/>
            <person name="Belas R."/>
            <person name="Fuqua C."/>
            <person name="Brinkac L.M."/>
            <person name="Lewis M."/>
            <person name="Johri S."/>
            <person name="Weaver B."/>
            <person name="Pai G."/>
            <person name="Eisen J.A."/>
            <person name="Rahe E."/>
            <person name="Sheldon W.M."/>
            <person name="Ye W."/>
            <person name="Miller T.R."/>
            <person name="Carlton J."/>
            <person name="Rasko D.A."/>
            <person name="Paulsen I.T."/>
            <person name="Ren Q."/>
            <person name="Daugherty S.C."/>
            <person name="DeBoy R.T."/>
            <person name="Dodson R.J."/>
            <person name="Durkin A.S."/>
            <person name="Madupu R."/>
            <person name="Nelson W.C."/>
            <person name="Sullivan S.A."/>
            <person name="Rosovitz M.J."/>
            <person name="Haft D.H."/>
            <person name="Selengut J."/>
            <person name="Ward N."/>
        </authorList>
    </citation>
    <scope>NUCLEOTIDE SEQUENCE [LARGE SCALE GENOMIC DNA]</scope>
    <source>
        <strain>ATCC 700808 / DSM 15171 / DSS-3</strain>
    </source>
</reference>
<reference key="2">
    <citation type="journal article" date="2014" name="Stand. Genomic Sci.">
        <title>An updated genome annotation for the model marine bacterium Ruegeria pomeroyi DSS-3.</title>
        <authorList>
            <person name="Rivers A.R."/>
            <person name="Smith C.B."/>
            <person name="Moran M.A."/>
        </authorList>
    </citation>
    <scope>GENOME REANNOTATION</scope>
    <source>
        <strain>ATCC 700808 / DSM 15171 / DSS-3</strain>
    </source>
</reference>
<dbReference type="EC" id="3.6.4.-" evidence="1"/>
<dbReference type="EMBL" id="CP000031">
    <property type="protein sequence ID" value="AAV96350.1"/>
    <property type="molecule type" value="Genomic_DNA"/>
</dbReference>
<dbReference type="RefSeq" id="WP_011048805.1">
    <property type="nucleotide sequence ID" value="NC_003911.12"/>
</dbReference>
<dbReference type="SMR" id="Q5LNT8"/>
<dbReference type="STRING" id="246200.SPO3115"/>
<dbReference type="PaxDb" id="246200-SPO3115"/>
<dbReference type="KEGG" id="sil:SPO3115"/>
<dbReference type="eggNOG" id="COG2255">
    <property type="taxonomic scope" value="Bacteria"/>
</dbReference>
<dbReference type="HOGENOM" id="CLU_055599_1_0_5"/>
<dbReference type="OrthoDB" id="9804478at2"/>
<dbReference type="Proteomes" id="UP000001023">
    <property type="component" value="Chromosome"/>
</dbReference>
<dbReference type="GO" id="GO:0005737">
    <property type="term" value="C:cytoplasm"/>
    <property type="evidence" value="ECO:0007669"/>
    <property type="project" value="UniProtKB-SubCell"/>
</dbReference>
<dbReference type="GO" id="GO:0048476">
    <property type="term" value="C:Holliday junction resolvase complex"/>
    <property type="evidence" value="ECO:0007669"/>
    <property type="project" value="UniProtKB-UniRule"/>
</dbReference>
<dbReference type="GO" id="GO:0005524">
    <property type="term" value="F:ATP binding"/>
    <property type="evidence" value="ECO:0007669"/>
    <property type="project" value="UniProtKB-UniRule"/>
</dbReference>
<dbReference type="GO" id="GO:0016887">
    <property type="term" value="F:ATP hydrolysis activity"/>
    <property type="evidence" value="ECO:0007669"/>
    <property type="project" value="InterPro"/>
</dbReference>
<dbReference type="GO" id="GO:0000400">
    <property type="term" value="F:four-way junction DNA binding"/>
    <property type="evidence" value="ECO:0007669"/>
    <property type="project" value="UniProtKB-UniRule"/>
</dbReference>
<dbReference type="GO" id="GO:0009378">
    <property type="term" value="F:four-way junction helicase activity"/>
    <property type="evidence" value="ECO:0007669"/>
    <property type="project" value="InterPro"/>
</dbReference>
<dbReference type="GO" id="GO:0006310">
    <property type="term" value="P:DNA recombination"/>
    <property type="evidence" value="ECO:0007669"/>
    <property type="project" value="UniProtKB-UniRule"/>
</dbReference>
<dbReference type="GO" id="GO:0006281">
    <property type="term" value="P:DNA repair"/>
    <property type="evidence" value="ECO:0007669"/>
    <property type="project" value="UniProtKB-UniRule"/>
</dbReference>
<dbReference type="CDD" id="cd00009">
    <property type="entry name" value="AAA"/>
    <property type="match status" value="1"/>
</dbReference>
<dbReference type="Gene3D" id="1.10.8.60">
    <property type="match status" value="1"/>
</dbReference>
<dbReference type="Gene3D" id="3.40.50.300">
    <property type="entry name" value="P-loop containing nucleotide triphosphate hydrolases"/>
    <property type="match status" value="1"/>
</dbReference>
<dbReference type="Gene3D" id="1.10.10.10">
    <property type="entry name" value="Winged helix-like DNA-binding domain superfamily/Winged helix DNA-binding domain"/>
    <property type="match status" value="1"/>
</dbReference>
<dbReference type="HAMAP" id="MF_00016">
    <property type="entry name" value="DNA_HJ_migration_RuvB"/>
    <property type="match status" value="1"/>
</dbReference>
<dbReference type="InterPro" id="IPR003593">
    <property type="entry name" value="AAA+_ATPase"/>
</dbReference>
<dbReference type="InterPro" id="IPR041445">
    <property type="entry name" value="AAA_lid_4"/>
</dbReference>
<dbReference type="InterPro" id="IPR004605">
    <property type="entry name" value="DNA_helicase_Holl-junc_RuvB"/>
</dbReference>
<dbReference type="InterPro" id="IPR027417">
    <property type="entry name" value="P-loop_NTPase"/>
</dbReference>
<dbReference type="InterPro" id="IPR008824">
    <property type="entry name" value="RuvB-like_N"/>
</dbReference>
<dbReference type="InterPro" id="IPR008823">
    <property type="entry name" value="RuvB_C"/>
</dbReference>
<dbReference type="InterPro" id="IPR036388">
    <property type="entry name" value="WH-like_DNA-bd_sf"/>
</dbReference>
<dbReference type="InterPro" id="IPR036390">
    <property type="entry name" value="WH_DNA-bd_sf"/>
</dbReference>
<dbReference type="NCBIfam" id="NF000868">
    <property type="entry name" value="PRK00080.1"/>
    <property type="match status" value="1"/>
</dbReference>
<dbReference type="NCBIfam" id="TIGR00635">
    <property type="entry name" value="ruvB"/>
    <property type="match status" value="1"/>
</dbReference>
<dbReference type="PANTHER" id="PTHR42848">
    <property type="match status" value="1"/>
</dbReference>
<dbReference type="PANTHER" id="PTHR42848:SF1">
    <property type="entry name" value="HOLLIDAY JUNCTION BRANCH MIGRATION COMPLEX SUBUNIT RUVB"/>
    <property type="match status" value="1"/>
</dbReference>
<dbReference type="Pfam" id="PF17864">
    <property type="entry name" value="AAA_lid_4"/>
    <property type="match status" value="1"/>
</dbReference>
<dbReference type="Pfam" id="PF05491">
    <property type="entry name" value="RuvB_C"/>
    <property type="match status" value="1"/>
</dbReference>
<dbReference type="Pfam" id="PF05496">
    <property type="entry name" value="RuvB_N"/>
    <property type="match status" value="1"/>
</dbReference>
<dbReference type="SMART" id="SM00382">
    <property type="entry name" value="AAA"/>
    <property type="match status" value="1"/>
</dbReference>
<dbReference type="SUPFAM" id="SSF52540">
    <property type="entry name" value="P-loop containing nucleoside triphosphate hydrolases"/>
    <property type="match status" value="1"/>
</dbReference>
<dbReference type="SUPFAM" id="SSF46785">
    <property type="entry name" value="Winged helix' DNA-binding domain"/>
    <property type="match status" value="1"/>
</dbReference>
<sequence>MTDADPTLRPDPLPEDNDRALRPQALDEFIGQAEARANLRIFVQSARQRGEAMDHTLFHGPPGLGKTTLAQIMARELGVNFRMTSGPVLAKAGDLAAILTNLEARDVLFIDEIHRLNPAVEEVLYPAMEDFELDLVIGDGPAARTVRIELQPFTLVGATTRMGLLTTPLRDRFGIPTRLLFYTVDELFEIVSRNARKLGAPAEEAGAREIARRARGTPRIAGRLLRRVVDFAVVEGDGRITRELADHALTRLGVDQLGLDGADRRYLRLIAENYSGGPVGIETLSAALSESRDSLEEVIEPYLLQQGLIQRTPRGRMLAQKAWTHLGLDAPRPPGQSDLFG</sequence>
<protein>
    <recommendedName>
        <fullName evidence="1">Holliday junction branch migration complex subunit RuvB</fullName>
        <ecNumber evidence="1">3.6.4.-</ecNumber>
    </recommendedName>
</protein>
<feature type="chain" id="PRO_0000235406" description="Holliday junction branch migration complex subunit RuvB">
    <location>
        <begin position="1"/>
        <end position="341"/>
    </location>
</feature>
<feature type="region of interest" description="Large ATPase domain (RuvB-L)" evidence="1">
    <location>
        <begin position="1"/>
        <end position="182"/>
    </location>
</feature>
<feature type="region of interest" description="Small ATPAse domain (RuvB-S)" evidence="1">
    <location>
        <begin position="183"/>
        <end position="253"/>
    </location>
</feature>
<feature type="region of interest" description="Head domain (RuvB-H)" evidence="1">
    <location>
        <begin position="256"/>
        <end position="341"/>
    </location>
</feature>
<feature type="binding site" evidence="1">
    <location>
        <position position="21"/>
    </location>
    <ligand>
        <name>ATP</name>
        <dbReference type="ChEBI" id="CHEBI:30616"/>
    </ligand>
</feature>
<feature type="binding site" evidence="1">
    <location>
        <position position="22"/>
    </location>
    <ligand>
        <name>ATP</name>
        <dbReference type="ChEBI" id="CHEBI:30616"/>
    </ligand>
</feature>
<feature type="binding site" evidence="1">
    <location>
        <position position="63"/>
    </location>
    <ligand>
        <name>ATP</name>
        <dbReference type="ChEBI" id="CHEBI:30616"/>
    </ligand>
</feature>
<feature type="binding site" evidence="1">
    <location>
        <position position="66"/>
    </location>
    <ligand>
        <name>ATP</name>
        <dbReference type="ChEBI" id="CHEBI:30616"/>
    </ligand>
</feature>
<feature type="binding site" evidence="1">
    <location>
        <position position="67"/>
    </location>
    <ligand>
        <name>ATP</name>
        <dbReference type="ChEBI" id="CHEBI:30616"/>
    </ligand>
</feature>
<feature type="binding site" evidence="1">
    <location>
        <position position="67"/>
    </location>
    <ligand>
        <name>Mg(2+)</name>
        <dbReference type="ChEBI" id="CHEBI:18420"/>
    </ligand>
</feature>
<feature type="binding site" evidence="1">
    <location>
        <position position="68"/>
    </location>
    <ligand>
        <name>ATP</name>
        <dbReference type="ChEBI" id="CHEBI:30616"/>
    </ligand>
</feature>
<feature type="binding site" evidence="1">
    <location>
        <begin position="129"/>
        <end position="131"/>
    </location>
    <ligand>
        <name>ATP</name>
        <dbReference type="ChEBI" id="CHEBI:30616"/>
    </ligand>
</feature>
<feature type="binding site" evidence="1">
    <location>
        <position position="172"/>
    </location>
    <ligand>
        <name>ATP</name>
        <dbReference type="ChEBI" id="CHEBI:30616"/>
    </ligand>
</feature>
<feature type="binding site" evidence="1">
    <location>
        <position position="182"/>
    </location>
    <ligand>
        <name>ATP</name>
        <dbReference type="ChEBI" id="CHEBI:30616"/>
    </ligand>
</feature>
<feature type="binding site" evidence="1">
    <location>
        <position position="219"/>
    </location>
    <ligand>
        <name>ATP</name>
        <dbReference type="ChEBI" id="CHEBI:30616"/>
    </ligand>
</feature>
<feature type="binding site" evidence="1">
    <location>
        <position position="292"/>
    </location>
    <ligand>
        <name>DNA</name>
        <dbReference type="ChEBI" id="CHEBI:16991"/>
    </ligand>
</feature>
<feature type="binding site" evidence="1">
    <location>
        <position position="311"/>
    </location>
    <ligand>
        <name>DNA</name>
        <dbReference type="ChEBI" id="CHEBI:16991"/>
    </ligand>
</feature>
<feature type="binding site" evidence="1">
    <location>
        <position position="316"/>
    </location>
    <ligand>
        <name>DNA</name>
        <dbReference type="ChEBI" id="CHEBI:16991"/>
    </ligand>
</feature>
<accession>Q5LNT8</accession>
<evidence type="ECO:0000255" key="1">
    <source>
        <dbReference type="HAMAP-Rule" id="MF_00016"/>
    </source>
</evidence>
<gene>
    <name evidence="1" type="primary">ruvB</name>
    <name type="ordered locus">SPO3115</name>
</gene>
<organism>
    <name type="scientific">Ruegeria pomeroyi (strain ATCC 700808 / DSM 15171 / DSS-3)</name>
    <name type="common">Silicibacter pomeroyi</name>
    <dbReference type="NCBI Taxonomy" id="246200"/>
    <lineage>
        <taxon>Bacteria</taxon>
        <taxon>Pseudomonadati</taxon>
        <taxon>Pseudomonadota</taxon>
        <taxon>Alphaproteobacteria</taxon>
        <taxon>Rhodobacterales</taxon>
        <taxon>Roseobacteraceae</taxon>
        <taxon>Ruegeria</taxon>
    </lineage>
</organism>
<proteinExistence type="inferred from homology"/>